<proteinExistence type="inferred from homology"/>
<sequence>MKTFTPKPADLTHDWYVIDATDVVLGRLATQAAILLRGKNKPTYAPHADSGNHVIIINADKIALTGNKMGKELYSHSGRPGGLRRDSYAELLEKNPERIIKNAVKGMLPKNRLAKVQLDRLRIFRGAEHPHTPQKPQVFEIAQVSQQAK</sequence>
<comment type="function">
    <text evidence="1">This protein is one of the early assembly proteins of the 50S ribosomal subunit, although it is not seen to bind rRNA by itself. It is important during the early stages of 50S assembly.</text>
</comment>
<comment type="subunit">
    <text evidence="1">Part of the 50S ribosomal subunit.</text>
</comment>
<comment type="similarity">
    <text evidence="1">Belongs to the universal ribosomal protein uL13 family.</text>
</comment>
<dbReference type="EMBL" id="AE014295">
    <property type="protein sequence ID" value="AAN25362.1"/>
    <property type="molecule type" value="Genomic_DNA"/>
</dbReference>
<dbReference type="RefSeq" id="NP_696726.1">
    <property type="nucleotide sequence ID" value="NC_004307.2"/>
</dbReference>
<dbReference type="RefSeq" id="WP_007053026.1">
    <property type="nucleotide sequence ID" value="NC_004307.2"/>
</dbReference>
<dbReference type="SMR" id="Q8G424"/>
<dbReference type="STRING" id="206672.BL1571"/>
<dbReference type="EnsemblBacteria" id="AAN25362">
    <property type="protein sequence ID" value="AAN25362"/>
    <property type="gene ID" value="BL1571"/>
</dbReference>
<dbReference type="GeneID" id="69578904"/>
<dbReference type="KEGG" id="blo:BL1571"/>
<dbReference type="PATRIC" id="fig|206672.9.peg.1628"/>
<dbReference type="HOGENOM" id="CLU_082184_2_1_11"/>
<dbReference type="OrthoDB" id="9801330at2"/>
<dbReference type="PhylomeDB" id="Q8G424"/>
<dbReference type="Proteomes" id="UP000000439">
    <property type="component" value="Chromosome"/>
</dbReference>
<dbReference type="GO" id="GO:0022625">
    <property type="term" value="C:cytosolic large ribosomal subunit"/>
    <property type="evidence" value="ECO:0007669"/>
    <property type="project" value="TreeGrafter"/>
</dbReference>
<dbReference type="GO" id="GO:0003729">
    <property type="term" value="F:mRNA binding"/>
    <property type="evidence" value="ECO:0007669"/>
    <property type="project" value="TreeGrafter"/>
</dbReference>
<dbReference type="GO" id="GO:0003735">
    <property type="term" value="F:structural constituent of ribosome"/>
    <property type="evidence" value="ECO:0007669"/>
    <property type="project" value="InterPro"/>
</dbReference>
<dbReference type="GO" id="GO:0017148">
    <property type="term" value="P:negative regulation of translation"/>
    <property type="evidence" value="ECO:0007669"/>
    <property type="project" value="TreeGrafter"/>
</dbReference>
<dbReference type="GO" id="GO:0006412">
    <property type="term" value="P:translation"/>
    <property type="evidence" value="ECO:0007669"/>
    <property type="project" value="UniProtKB-UniRule"/>
</dbReference>
<dbReference type="CDD" id="cd00392">
    <property type="entry name" value="Ribosomal_L13"/>
    <property type="match status" value="1"/>
</dbReference>
<dbReference type="Gene3D" id="3.90.1180.10">
    <property type="entry name" value="Ribosomal protein L13"/>
    <property type="match status" value="1"/>
</dbReference>
<dbReference type="HAMAP" id="MF_01366">
    <property type="entry name" value="Ribosomal_uL13"/>
    <property type="match status" value="1"/>
</dbReference>
<dbReference type="InterPro" id="IPR005822">
    <property type="entry name" value="Ribosomal_uL13"/>
</dbReference>
<dbReference type="InterPro" id="IPR005823">
    <property type="entry name" value="Ribosomal_uL13_bac-type"/>
</dbReference>
<dbReference type="InterPro" id="IPR036899">
    <property type="entry name" value="Ribosomal_uL13_sf"/>
</dbReference>
<dbReference type="NCBIfam" id="TIGR01066">
    <property type="entry name" value="rplM_bact"/>
    <property type="match status" value="1"/>
</dbReference>
<dbReference type="PANTHER" id="PTHR11545:SF2">
    <property type="entry name" value="LARGE RIBOSOMAL SUBUNIT PROTEIN UL13M"/>
    <property type="match status" value="1"/>
</dbReference>
<dbReference type="PANTHER" id="PTHR11545">
    <property type="entry name" value="RIBOSOMAL PROTEIN L13"/>
    <property type="match status" value="1"/>
</dbReference>
<dbReference type="Pfam" id="PF00572">
    <property type="entry name" value="Ribosomal_L13"/>
    <property type="match status" value="1"/>
</dbReference>
<dbReference type="PIRSF" id="PIRSF002181">
    <property type="entry name" value="Ribosomal_L13"/>
    <property type="match status" value="1"/>
</dbReference>
<dbReference type="SUPFAM" id="SSF52161">
    <property type="entry name" value="Ribosomal protein L13"/>
    <property type="match status" value="1"/>
</dbReference>
<reference key="1">
    <citation type="journal article" date="2002" name="Proc. Natl. Acad. Sci. U.S.A.">
        <title>The genome sequence of Bifidobacterium longum reflects its adaptation to the human gastrointestinal tract.</title>
        <authorList>
            <person name="Schell M.A."/>
            <person name="Karmirantzou M."/>
            <person name="Snel B."/>
            <person name="Vilanova D."/>
            <person name="Berger B."/>
            <person name="Pessi G."/>
            <person name="Zwahlen M.-C."/>
            <person name="Desiere F."/>
            <person name="Bork P."/>
            <person name="Delley M."/>
            <person name="Pridmore R.D."/>
            <person name="Arigoni F."/>
        </authorList>
    </citation>
    <scope>NUCLEOTIDE SEQUENCE [LARGE SCALE GENOMIC DNA]</scope>
    <source>
        <strain>NCC 2705</strain>
    </source>
</reference>
<accession>Q8G424</accession>
<name>RL13_BIFLO</name>
<protein>
    <recommendedName>
        <fullName evidence="1">Large ribosomal subunit protein uL13</fullName>
    </recommendedName>
    <alternativeName>
        <fullName evidence="2">50S ribosomal protein L13</fullName>
    </alternativeName>
</protein>
<evidence type="ECO:0000255" key="1">
    <source>
        <dbReference type="HAMAP-Rule" id="MF_01366"/>
    </source>
</evidence>
<evidence type="ECO:0000305" key="2"/>
<organism>
    <name type="scientific">Bifidobacterium longum (strain NCC 2705)</name>
    <dbReference type="NCBI Taxonomy" id="206672"/>
    <lineage>
        <taxon>Bacteria</taxon>
        <taxon>Bacillati</taxon>
        <taxon>Actinomycetota</taxon>
        <taxon>Actinomycetes</taxon>
        <taxon>Bifidobacteriales</taxon>
        <taxon>Bifidobacteriaceae</taxon>
        <taxon>Bifidobacterium</taxon>
    </lineage>
</organism>
<keyword id="KW-1185">Reference proteome</keyword>
<keyword id="KW-0687">Ribonucleoprotein</keyword>
<keyword id="KW-0689">Ribosomal protein</keyword>
<feature type="chain" id="PRO_1000055347" description="Large ribosomal subunit protein uL13">
    <location>
        <begin position="1"/>
        <end position="149"/>
    </location>
</feature>
<gene>
    <name evidence="1" type="primary">rplM</name>
    <name type="ordered locus">BL1571</name>
</gene>